<sequence length="509" mass="54633">MTVAAGAAKAAGAELLDYDEVVARFQPVLGLEVHVELSTATKMFCGCTTTFGGEPNTQVCPVCLGLPGSLPVLNRAAVESAIRIGLALNCEIVPWCRFARKNYFYPDMPKNYQISQYDEPIAINGYLDAPLEDGTTWRVEIERAHMEEDTGKLTHIGSETGRIHGATGSLIDYNRAGVPLIEIVTKPIVGAGARAPQIARSYVTALRDLLRALDVSDVRMDQGSMRCDANVSLKPAGTTEFGTRTETKNVNSLKSVEVAVRYEMQRQGAILASGGRITQETRHFHEAGYTSAGRTKETAEDYRYFPEPDLEPVAPSRELVERLRQTIPELPWLSRRRIQQEWGVSDEVMRDLVNAGAVELVAATVEHGASSEAARAWWGNFLAQKANEAGIGLDELAITPAQVAAVVALVDEGKLSNSLARQVVEGVLAGEGEPEQVMTARGLALVRDDSLTQAAVDEALAANPDVADKIRGGKVAAAGAIVGAVMKATRGQADAARVRELVLEACGQG</sequence>
<gene>
    <name evidence="1" type="primary">gatB</name>
    <name type="ordered locus">MRA_3039</name>
</gene>
<keyword id="KW-0067">ATP-binding</keyword>
<keyword id="KW-0436">Ligase</keyword>
<keyword id="KW-0547">Nucleotide-binding</keyword>
<keyword id="KW-0648">Protein biosynthesis</keyword>
<keyword id="KW-1185">Reference proteome</keyword>
<name>GATB_MYCTA</name>
<proteinExistence type="inferred from homology"/>
<protein>
    <recommendedName>
        <fullName evidence="1">Aspartyl/glutamyl-tRNA(Asn/Gln) amidotransferase subunit B</fullName>
        <shortName evidence="1">Asp/Glu-ADT subunit B</shortName>
        <ecNumber evidence="1">6.3.5.-</ecNumber>
    </recommendedName>
</protein>
<organism>
    <name type="scientific">Mycobacterium tuberculosis (strain ATCC 25177 / H37Ra)</name>
    <dbReference type="NCBI Taxonomy" id="419947"/>
    <lineage>
        <taxon>Bacteria</taxon>
        <taxon>Bacillati</taxon>
        <taxon>Actinomycetota</taxon>
        <taxon>Actinomycetes</taxon>
        <taxon>Mycobacteriales</taxon>
        <taxon>Mycobacteriaceae</taxon>
        <taxon>Mycobacterium</taxon>
        <taxon>Mycobacterium tuberculosis complex</taxon>
    </lineage>
</organism>
<accession>A5U721</accession>
<comment type="function">
    <text evidence="1">Allows the formation of correctly charged Asn-tRNA(Asn) or Gln-tRNA(Gln) through the transamidation of misacylated Asp-tRNA(Asn) or Glu-tRNA(Gln) in organisms which lack either or both of asparaginyl-tRNA or glutaminyl-tRNA synthetases. The reaction takes place in the presence of glutamine and ATP through an activated phospho-Asp-tRNA(Asn) or phospho-Glu-tRNA(Gln).</text>
</comment>
<comment type="catalytic activity">
    <reaction evidence="1">
        <text>L-glutamyl-tRNA(Gln) + L-glutamine + ATP + H2O = L-glutaminyl-tRNA(Gln) + L-glutamate + ADP + phosphate + H(+)</text>
        <dbReference type="Rhea" id="RHEA:17521"/>
        <dbReference type="Rhea" id="RHEA-COMP:9681"/>
        <dbReference type="Rhea" id="RHEA-COMP:9684"/>
        <dbReference type="ChEBI" id="CHEBI:15377"/>
        <dbReference type="ChEBI" id="CHEBI:15378"/>
        <dbReference type="ChEBI" id="CHEBI:29985"/>
        <dbReference type="ChEBI" id="CHEBI:30616"/>
        <dbReference type="ChEBI" id="CHEBI:43474"/>
        <dbReference type="ChEBI" id="CHEBI:58359"/>
        <dbReference type="ChEBI" id="CHEBI:78520"/>
        <dbReference type="ChEBI" id="CHEBI:78521"/>
        <dbReference type="ChEBI" id="CHEBI:456216"/>
    </reaction>
</comment>
<comment type="catalytic activity">
    <reaction evidence="1">
        <text>L-aspartyl-tRNA(Asn) + L-glutamine + ATP + H2O = L-asparaginyl-tRNA(Asn) + L-glutamate + ADP + phosphate + 2 H(+)</text>
        <dbReference type="Rhea" id="RHEA:14513"/>
        <dbReference type="Rhea" id="RHEA-COMP:9674"/>
        <dbReference type="Rhea" id="RHEA-COMP:9677"/>
        <dbReference type="ChEBI" id="CHEBI:15377"/>
        <dbReference type="ChEBI" id="CHEBI:15378"/>
        <dbReference type="ChEBI" id="CHEBI:29985"/>
        <dbReference type="ChEBI" id="CHEBI:30616"/>
        <dbReference type="ChEBI" id="CHEBI:43474"/>
        <dbReference type="ChEBI" id="CHEBI:58359"/>
        <dbReference type="ChEBI" id="CHEBI:78515"/>
        <dbReference type="ChEBI" id="CHEBI:78516"/>
        <dbReference type="ChEBI" id="CHEBI:456216"/>
    </reaction>
</comment>
<comment type="subunit">
    <text evidence="1">Heterotrimer of A, B and C subunits.</text>
</comment>
<comment type="similarity">
    <text evidence="1">Belongs to the GatB/GatE family. GatB subfamily.</text>
</comment>
<dbReference type="EC" id="6.3.5.-" evidence="1"/>
<dbReference type="EMBL" id="CP000611">
    <property type="protein sequence ID" value="ABQ74821.1"/>
    <property type="molecule type" value="Genomic_DNA"/>
</dbReference>
<dbReference type="RefSeq" id="WP_003415248.1">
    <property type="nucleotide sequence ID" value="NZ_CP016972.1"/>
</dbReference>
<dbReference type="SMR" id="A5U721"/>
<dbReference type="KEGG" id="mra:MRA_3039"/>
<dbReference type="eggNOG" id="COG0064">
    <property type="taxonomic scope" value="Bacteria"/>
</dbReference>
<dbReference type="HOGENOM" id="CLU_019240_0_0_11"/>
<dbReference type="Proteomes" id="UP000001988">
    <property type="component" value="Chromosome"/>
</dbReference>
<dbReference type="GO" id="GO:0050566">
    <property type="term" value="F:asparaginyl-tRNA synthase (glutamine-hydrolyzing) activity"/>
    <property type="evidence" value="ECO:0007669"/>
    <property type="project" value="RHEA"/>
</dbReference>
<dbReference type="GO" id="GO:0005524">
    <property type="term" value="F:ATP binding"/>
    <property type="evidence" value="ECO:0007669"/>
    <property type="project" value="UniProtKB-KW"/>
</dbReference>
<dbReference type="GO" id="GO:0050567">
    <property type="term" value="F:glutaminyl-tRNA synthase (glutamine-hydrolyzing) activity"/>
    <property type="evidence" value="ECO:0007669"/>
    <property type="project" value="UniProtKB-UniRule"/>
</dbReference>
<dbReference type="GO" id="GO:0070681">
    <property type="term" value="P:glutaminyl-tRNAGln biosynthesis via transamidation"/>
    <property type="evidence" value="ECO:0007669"/>
    <property type="project" value="TreeGrafter"/>
</dbReference>
<dbReference type="GO" id="GO:0006412">
    <property type="term" value="P:translation"/>
    <property type="evidence" value="ECO:0007669"/>
    <property type="project" value="UniProtKB-UniRule"/>
</dbReference>
<dbReference type="FunFam" id="1.10.10.410:FF:000002">
    <property type="entry name" value="Aspartyl/glutamyl-tRNA(Asn/Gln) amidotransferase subunit B"/>
    <property type="match status" value="1"/>
</dbReference>
<dbReference type="Gene3D" id="1.10.10.410">
    <property type="match status" value="1"/>
</dbReference>
<dbReference type="HAMAP" id="MF_00121">
    <property type="entry name" value="GatB"/>
    <property type="match status" value="1"/>
</dbReference>
<dbReference type="InterPro" id="IPR017959">
    <property type="entry name" value="Asn/Gln-tRNA_amidoTrfase_suB/E"/>
</dbReference>
<dbReference type="InterPro" id="IPR006075">
    <property type="entry name" value="Asn/Gln-tRNA_Trfase_suB/E_cat"/>
</dbReference>
<dbReference type="InterPro" id="IPR018027">
    <property type="entry name" value="Asn/Gln_amidotransferase"/>
</dbReference>
<dbReference type="InterPro" id="IPR003789">
    <property type="entry name" value="Asn/Gln_tRNA_amidoTrase-B-like"/>
</dbReference>
<dbReference type="InterPro" id="IPR004413">
    <property type="entry name" value="GatB"/>
</dbReference>
<dbReference type="InterPro" id="IPR023168">
    <property type="entry name" value="GatB_Yqey_C_2"/>
</dbReference>
<dbReference type="InterPro" id="IPR017958">
    <property type="entry name" value="Gln-tRNA_amidoTrfase_suB_CS"/>
</dbReference>
<dbReference type="InterPro" id="IPR014746">
    <property type="entry name" value="Gln_synth/guanido_kin_cat_dom"/>
</dbReference>
<dbReference type="NCBIfam" id="TIGR00133">
    <property type="entry name" value="gatB"/>
    <property type="match status" value="1"/>
</dbReference>
<dbReference type="NCBIfam" id="NF004012">
    <property type="entry name" value="PRK05477.1-2"/>
    <property type="match status" value="1"/>
</dbReference>
<dbReference type="NCBIfam" id="NF004013">
    <property type="entry name" value="PRK05477.1-3"/>
    <property type="match status" value="1"/>
</dbReference>
<dbReference type="NCBIfam" id="NF004014">
    <property type="entry name" value="PRK05477.1-4"/>
    <property type="match status" value="1"/>
</dbReference>
<dbReference type="PANTHER" id="PTHR11659">
    <property type="entry name" value="GLUTAMYL-TRNA GLN AMIDOTRANSFERASE SUBUNIT B MITOCHONDRIAL AND PROKARYOTIC PET112-RELATED"/>
    <property type="match status" value="1"/>
</dbReference>
<dbReference type="PANTHER" id="PTHR11659:SF0">
    <property type="entry name" value="GLUTAMYL-TRNA(GLN) AMIDOTRANSFERASE SUBUNIT B, MITOCHONDRIAL"/>
    <property type="match status" value="1"/>
</dbReference>
<dbReference type="Pfam" id="PF02934">
    <property type="entry name" value="GatB_N"/>
    <property type="match status" value="1"/>
</dbReference>
<dbReference type="Pfam" id="PF02637">
    <property type="entry name" value="GatB_Yqey"/>
    <property type="match status" value="1"/>
</dbReference>
<dbReference type="SMART" id="SM00845">
    <property type="entry name" value="GatB_Yqey"/>
    <property type="match status" value="1"/>
</dbReference>
<dbReference type="SUPFAM" id="SSF89095">
    <property type="entry name" value="GatB/YqeY motif"/>
    <property type="match status" value="1"/>
</dbReference>
<dbReference type="SUPFAM" id="SSF55931">
    <property type="entry name" value="Glutamine synthetase/guanido kinase"/>
    <property type="match status" value="1"/>
</dbReference>
<dbReference type="PROSITE" id="PS01234">
    <property type="entry name" value="GATB"/>
    <property type="match status" value="1"/>
</dbReference>
<feature type="chain" id="PRO_1000016005" description="Aspartyl/glutamyl-tRNA(Asn/Gln) amidotransferase subunit B">
    <location>
        <begin position="1"/>
        <end position="509"/>
    </location>
</feature>
<reference key="1">
    <citation type="journal article" date="2008" name="PLoS ONE">
        <title>Genetic basis of virulence attenuation revealed by comparative genomic analysis of Mycobacterium tuberculosis strain H37Ra versus H37Rv.</title>
        <authorList>
            <person name="Zheng H."/>
            <person name="Lu L."/>
            <person name="Wang B."/>
            <person name="Pu S."/>
            <person name="Zhang X."/>
            <person name="Zhu G."/>
            <person name="Shi W."/>
            <person name="Zhang L."/>
            <person name="Wang H."/>
            <person name="Wang S."/>
            <person name="Zhao G."/>
            <person name="Zhang Y."/>
        </authorList>
    </citation>
    <scope>NUCLEOTIDE SEQUENCE [LARGE SCALE GENOMIC DNA]</scope>
    <source>
        <strain>ATCC 25177 / H37Ra</strain>
    </source>
</reference>
<evidence type="ECO:0000255" key="1">
    <source>
        <dbReference type="HAMAP-Rule" id="MF_00121"/>
    </source>
</evidence>